<comment type="function">
    <text evidence="1">An aminoacyl-tRNA editing enzyme that deacylates mischarged D-aminoacyl-tRNAs. Also deacylates mischarged glycyl-tRNA(Ala), protecting cells against glycine mischarging by AlaRS. Acts via tRNA-based rather than protein-based catalysis; rejects L-amino acids rather than detecting D-amino acids in the active site. By recycling D-aminoacyl-tRNA to D-amino acids and free tRNA molecules, this enzyme counteracts the toxicity associated with the formation of D-aminoacyl-tRNA entities in vivo and helps enforce protein L-homochirality.</text>
</comment>
<comment type="catalytic activity">
    <reaction evidence="1">
        <text>glycyl-tRNA(Ala) + H2O = tRNA(Ala) + glycine + H(+)</text>
        <dbReference type="Rhea" id="RHEA:53744"/>
        <dbReference type="Rhea" id="RHEA-COMP:9657"/>
        <dbReference type="Rhea" id="RHEA-COMP:13640"/>
        <dbReference type="ChEBI" id="CHEBI:15377"/>
        <dbReference type="ChEBI" id="CHEBI:15378"/>
        <dbReference type="ChEBI" id="CHEBI:57305"/>
        <dbReference type="ChEBI" id="CHEBI:78442"/>
        <dbReference type="ChEBI" id="CHEBI:78522"/>
        <dbReference type="EC" id="3.1.1.96"/>
    </reaction>
</comment>
<comment type="catalytic activity">
    <reaction evidence="1">
        <text>a D-aminoacyl-tRNA + H2O = a tRNA + a D-alpha-amino acid + H(+)</text>
        <dbReference type="Rhea" id="RHEA:13953"/>
        <dbReference type="Rhea" id="RHEA-COMP:10123"/>
        <dbReference type="Rhea" id="RHEA-COMP:10124"/>
        <dbReference type="ChEBI" id="CHEBI:15377"/>
        <dbReference type="ChEBI" id="CHEBI:15378"/>
        <dbReference type="ChEBI" id="CHEBI:59871"/>
        <dbReference type="ChEBI" id="CHEBI:78442"/>
        <dbReference type="ChEBI" id="CHEBI:79333"/>
        <dbReference type="EC" id="3.1.1.96"/>
    </reaction>
</comment>
<comment type="subunit">
    <text evidence="1">Homodimer.</text>
</comment>
<comment type="subcellular location">
    <subcellularLocation>
        <location evidence="1">Cytoplasm</location>
    </subcellularLocation>
</comment>
<comment type="domain">
    <text evidence="1">A Gly-cisPro motif from one monomer fits into the active site of the other monomer to allow specific chiral rejection of L-amino acids.</text>
</comment>
<comment type="similarity">
    <text evidence="1">Belongs to the DTD family.</text>
</comment>
<gene>
    <name evidence="1" type="primary">dtd</name>
    <name type="ordered locus">Clim_2039</name>
</gene>
<keyword id="KW-0963">Cytoplasm</keyword>
<keyword id="KW-0378">Hydrolase</keyword>
<keyword id="KW-0694">RNA-binding</keyword>
<keyword id="KW-0820">tRNA-binding</keyword>
<feature type="chain" id="PRO_1000127504" description="D-aminoacyl-tRNA deacylase">
    <location>
        <begin position="1"/>
        <end position="150"/>
    </location>
</feature>
<feature type="short sequence motif" description="Gly-cisPro motif, important for rejection of L-amino acids" evidence="1">
    <location>
        <begin position="138"/>
        <end position="139"/>
    </location>
</feature>
<sequence length="150" mass="16310">MRAVVQRVLSASVAAGSSRHSEIGRGLLVLLGVAQGDTELEAEWMSRKIVQLRIFDDAAGRMNLPVRDTGGDILLVSQFTLYGDASRGNRPGFSGSADFEKARPLYEKAVRSIEQHLGKPVMTGWYGEAMQVALINDGPVTLILDTPQRL</sequence>
<organism>
    <name type="scientific">Chlorobium limicola (strain DSM 245 / NBRC 103803 / 6330)</name>
    <dbReference type="NCBI Taxonomy" id="290315"/>
    <lineage>
        <taxon>Bacteria</taxon>
        <taxon>Pseudomonadati</taxon>
        <taxon>Chlorobiota</taxon>
        <taxon>Chlorobiia</taxon>
        <taxon>Chlorobiales</taxon>
        <taxon>Chlorobiaceae</taxon>
        <taxon>Chlorobium/Pelodictyon group</taxon>
        <taxon>Chlorobium</taxon>
    </lineage>
</organism>
<dbReference type="EC" id="3.1.1.96" evidence="1"/>
<dbReference type="EMBL" id="CP001097">
    <property type="protein sequence ID" value="ACD91068.1"/>
    <property type="molecule type" value="Genomic_DNA"/>
</dbReference>
<dbReference type="RefSeq" id="WP_012466937.1">
    <property type="nucleotide sequence ID" value="NC_010803.1"/>
</dbReference>
<dbReference type="SMR" id="B3EG59"/>
<dbReference type="STRING" id="290315.Clim_2039"/>
<dbReference type="KEGG" id="cli:Clim_2039"/>
<dbReference type="eggNOG" id="COG1490">
    <property type="taxonomic scope" value="Bacteria"/>
</dbReference>
<dbReference type="HOGENOM" id="CLU_076901_1_0_10"/>
<dbReference type="OrthoDB" id="9801395at2"/>
<dbReference type="Proteomes" id="UP000008841">
    <property type="component" value="Chromosome"/>
</dbReference>
<dbReference type="GO" id="GO:0005737">
    <property type="term" value="C:cytoplasm"/>
    <property type="evidence" value="ECO:0007669"/>
    <property type="project" value="UniProtKB-SubCell"/>
</dbReference>
<dbReference type="GO" id="GO:0051500">
    <property type="term" value="F:D-tyrosyl-tRNA(Tyr) deacylase activity"/>
    <property type="evidence" value="ECO:0007669"/>
    <property type="project" value="TreeGrafter"/>
</dbReference>
<dbReference type="GO" id="GO:0106026">
    <property type="term" value="F:Gly-tRNA(Ala) deacylase activity"/>
    <property type="evidence" value="ECO:0007669"/>
    <property type="project" value="UniProtKB-UniRule"/>
</dbReference>
<dbReference type="GO" id="GO:0043908">
    <property type="term" value="F:Ser(Gly)-tRNA(Ala) hydrolase activity"/>
    <property type="evidence" value="ECO:0007669"/>
    <property type="project" value="UniProtKB-UniRule"/>
</dbReference>
<dbReference type="GO" id="GO:0000049">
    <property type="term" value="F:tRNA binding"/>
    <property type="evidence" value="ECO:0007669"/>
    <property type="project" value="UniProtKB-UniRule"/>
</dbReference>
<dbReference type="GO" id="GO:0019478">
    <property type="term" value="P:D-amino acid catabolic process"/>
    <property type="evidence" value="ECO:0007669"/>
    <property type="project" value="UniProtKB-UniRule"/>
</dbReference>
<dbReference type="FunFam" id="3.50.80.10:FF:000001">
    <property type="entry name" value="D-aminoacyl-tRNA deacylase"/>
    <property type="match status" value="1"/>
</dbReference>
<dbReference type="Gene3D" id="3.50.80.10">
    <property type="entry name" value="D-tyrosyl-tRNA(Tyr) deacylase"/>
    <property type="match status" value="1"/>
</dbReference>
<dbReference type="HAMAP" id="MF_00518">
    <property type="entry name" value="Deacylase_Dtd"/>
    <property type="match status" value="1"/>
</dbReference>
<dbReference type="InterPro" id="IPR003732">
    <property type="entry name" value="Daa-tRNA_deacyls_DTD"/>
</dbReference>
<dbReference type="InterPro" id="IPR023509">
    <property type="entry name" value="DTD-like_sf"/>
</dbReference>
<dbReference type="NCBIfam" id="TIGR00256">
    <property type="entry name" value="D-aminoacyl-tRNA deacylase"/>
    <property type="match status" value="1"/>
</dbReference>
<dbReference type="PANTHER" id="PTHR10472:SF5">
    <property type="entry name" value="D-AMINOACYL-TRNA DEACYLASE 1"/>
    <property type="match status" value="1"/>
</dbReference>
<dbReference type="PANTHER" id="PTHR10472">
    <property type="entry name" value="D-TYROSYL-TRNA TYR DEACYLASE"/>
    <property type="match status" value="1"/>
</dbReference>
<dbReference type="Pfam" id="PF02580">
    <property type="entry name" value="Tyr_Deacylase"/>
    <property type="match status" value="1"/>
</dbReference>
<dbReference type="SUPFAM" id="SSF69500">
    <property type="entry name" value="DTD-like"/>
    <property type="match status" value="1"/>
</dbReference>
<accession>B3EG59</accession>
<evidence type="ECO:0000255" key="1">
    <source>
        <dbReference type="HAMAP-Rule" id="MF_00518"/>
    </source>
</evidence>
<protein>
    <recommendedName>
        <fullName evidence="1">D-aminoacyl-tRNA deacylase</fullName>
        <shortName evidence="1">DTD</shortName>
        <ecNumber evidence="1">3.1.1.96</ecNumber>
    </recommendedName>
    <alternativeName>
        <fullName evidence="1">Gly-tRNA(Ala) deacylase</fullName>
    </alternativeName>
</protein>
<name>DTD_CHLL2</name>
<proteinExistence type="inferred from homology"/>
<reference key="1">
    <citation type="submission" date="2008-05" db="EMBL/GenBank/DDBJ databases">
        <title>Complete sequence of Chlorobium limicola DSM 245.</title>
        <authorList>
            <consortium name="US DOE Joint Genome Institute"/>
            <person name="Lucas S."/>
            <person name="Copeland A."/>
            <person name="Lapidus A."/>
            <person name="Glavina del Rio T."/>
            <person name="Dalin E."/>
            <person name="Tice H."/>
            <person name="Bruce D."/>
            <person name="Goodwin L."/>
            <person name="Pitluck S."/>
            <person name="Schmutz J."/>
            <person name="Larimer F."/>
            <person name="Land M."/>
            <person name="Hauser L."/>
            <person name="Kyrpides N."/>
            <person name="Ovchinnikova G."/>
            <person name="Zhao F."/>
            <person name="Li T."/>
            <person name="Liu Z."/>
            <person name="Overmann J."/>
            <person name="Bryant D.A."/>
            <person name="Richardson P."/>
        </authorList>
    </citation>
    <scope>NUCLEOTIDE SEQUENCE [LARGE SCALE GENOMIC DNA]</scope>
    <source>
        <strain>DSM 245 / NBRC 103803 / 6330</strain>
    </source>
</reference>